<proteinExistence type="inferred from homology"/>
<reference key="1">
    <citation type="journal article" date="2002" name="Proc. Natl. Acad. Sci. U.S.A.">
        <title>Extensive mosaic structure revealed by the complete genome sequence of uropathogenic Escherichia coli.</title>
        <authorList>
            <person name="Welch R.A."/>
            <person name="Burland V."/>
            <person name="Plunkett G. III"/>
            <person name="Redford P."/>
            <person name="Roesch P."/>
            <person name="Rasko D."/>
            <person name="Buckles E.L."/>
            <person name="Liou S.-R."/>
            <person name="Boutin A."/>
            <person name="Hackett J."/>
            <person name="Stroud D."/>
            <person name="Mayhew G.F."/>
            <person name="Rose D.J."/>
            <person name="Zhou S."/>
            <person name="Schwartz D.C."/>
            <person name="Perna N.T."/>
            <person name="Mobley H.L.T."/>
            <person name="Donnenberg M.S."/>
            <person name="Blattner F.R."/>
        </authorList>
    </citation>
    <scope>NUCLEOTIDE SEQUENCE [LARGE SCALE GENOMIC DNA]</scope>
    <source>
        <strain>CFT073 / ATCC 700928 / UPEC</strain>
    </source>
</reference>
<name>TUSA_ECOL6</name>
<comment type="function">
    <text evidence="1">Sulfur carrier protein involved in sulfur trafficking in the cell. Part of a sulfur-relay system required for 2-thiolation during synthesis of 2-thiouridine of the modified wobble base 5-methylaminomethyl-2-thiouridine (mnm(5)s(2)U) in tRNA. Interacts with IscS and stimulates its cysteine desulfurase activity. Accepts an activated sulfur from IscS, which is then transferred to TusD, and thus determines the direction of sulfur flow from IscS to 2-thiouridine formation. Also appears to be involved in sulfur transfer for the biosynthesis of molybdopterin.</text>
</comment>
<comment type="pathway">
    <text evidence="1">tRNA modification.</text>
</comment>
<comment type="subunit">
    <text evidence="1">Interacts with IscS.</text>
</comment>
<comment type="subcellular location">
    <subcellularLocation>
        <location evidence="1">Cytoplasm</location>
    </subcellularLocation>
</comment>
<comment type="similarity">
    <text evidence="1">Belongs to the sulfur carrier protein TusA family.</text>
</comment>
<keyword id="KW-0963">Cytoplasm</keyword>
<keyword id="KW-1185">Reference proteome</keyword>
<keyword id="KW-0819">tRNA processing</keyword>
<dbReference type="EMBL" id="AE014075">
    <property type="protein sequence ID" value="AAN82699.1"/>
    <property type="molecule type" value="Genomic_DNA"/>
</dbReference>
<dbReference type="RefSeq" id="WP_000130621.1">
    <property type="nucleotide sequence ID" value="NZ_CP051263.1"/>
</dbReference>
<dbReference type="SMR" id="P0A891"/>
<dbReference type="STRING" id="199310.c4263"/>
<dbReference type="GeneID" id="93778521"/>
<dbReference type="KEGG" id="ecc:c4263"/>
<dbReference type="eggNOG" id="COG0425">
    <property type="taxonomic scope" value="Bacteria"/>
</dbReference>
<dbReference type="HOGENOM" id="CLU_165255_5_0_6"/>
<dbReference type="BioCyc" id="ECOL199310:C4263-MONOMER"/>
<dbReference type="Proteomes" id="UP000001410">
    <property type="component" value="Chromosome"/>
</dbReference>
<dbReference type="GO" id="GO:0005737">
    <property type="term" value="C:cytoplasm"/>
    <property type="evidence" value="ECO:0007669"/>
    <property type="project" value="UniProtKB-SubCell"/>
</dbReference>
<dbReference type="GO" id="GO:0097163">
    <property type="term" value="F:sulfur carrier activity"/>
    <property type="evidence" value="ECO:0007669"/>
    <property type="project" value="UniProtKB-UniRule"/>
</dbReference>
<dbReference type="GO" id="GO:0002143">
    <property type="term" value="P:tRNA wobble position uridine thiolation"/>
    <property type="evidence" value="ECO:0007669"/>
    <property type="project" value="InterPro"/>
</dbReference>
<dbReference type="CDD" id="cd03423">
    <property type="entry name" value="SirA"/>
    <property type="match status" value="1"/>
</dbReference>
<dbReference type="FunFam" id="3.30.110.40:FF:000002">
    <property type="entry name" value="Sulfur carrier protein TusA"/>
    <property type="match status" value="1"/>
</dbReference>
<dbReference type="Gene3D" id="3.30.110.40">
    <property type="entry name" value="TusA-like domain"/>
    <property type="match status" value="1"/>
</dbReference>
<dbReference type="HAMAP" id="MF_00413">
    <property type="entry name" value="Thiourid_synth_A"/>
    <property type="match status" value="1"/>
</dbReference>
<dbReference type="InterPro" id="IPR022931">
    <property type="entry name" value="Sulphur_carrier_TusA"/>
</dbReference>
<dbReference type="InterPro" id="IPR001455">
    <property type="entry name" value="TusA-like"/>
</dbReference>
<dbReference type="InterPro" id="IPR036868">
    <property type="entry name" value="TusA-like_sf"/>
</dbReference>
<dbReference type="NCBIfam" id="NF001423">
    <property type="entry name" value="PRK00299.1"/>
    <property type="match status" value="1"/>
</dbReference>
<dbReference type="PANTHER" id="PTHR33279:SF2">
    <property type="entry name" value="SULFUR CARRIER PROTEIN TUSA"/>
    <property type="match status" value="1"/>
</dbReference>
<dbReference type="PANTHER" id="PTHR33279">
    <property type="entry name" value="SULFUR CARRIER PROTEIN YEDF-RELATED"/>
    <property type="match status" value="1"/>
</dbReference>
<dbReference type="Pfam" id="PF01206">
    <property type="entry name" value="TusA"/>
    <property type="match status" value="1"/>
</dbReference>
<dbReference type="SUPFAM" id="SSF64307">
    <property type="entry name" value="SirA-like"/>
    <property type="match status" value="1"/>
</dbReference>
<dbReference type="PROSITE" id="PS01148">
    <property type="entry name" value="UPF0033"/>
    <property type="match status" value="1"/>
</dbReference>
<sequence length="81" mass="9095">MTDLFSSPDHTLDALGLRCPEPVMMVRKTVRNMQPGETLLIIADDPATTRDIPGFCTFMEHELVAKETDGLPYRYLIRKGG</sequence>
<evidence type="ECO:0000255" key="1">
    <source>
        <dbReference type="HAMAP-Rule" id="MF_00413"/>
    </source>
</evidence>
<feature type="chain" id="PRO_0000159035" description="Sulfur carrier protein TusA">
    <location>
        <begin position="1"/>
        <end position="81"/>
    </location>
</feature>
<feature type="active site" description="Cysteine persulfide intermediate" evidence="1">
    <location>
        <position position="19"/>
    </location>
</feature>
<protein>
    <recommendedName>
        <fullName evidence="1">Sulfur carrier protein TusA</fullName>
    </recommendedName>
    <alternativeName>
        <fullName evidence="1">Sulfur mediator TusA</fullName>
    </alternativeName>
    <alternativeName>
        <fullName evidence="1">Sulfur transfer protein TusA</fullName>
    </alternativeName>
    <alternativeName>
        <fullName evidence="1">tRNA 2-thiouridine synthesizing protein A</fullName>
    </alternativeName>
</protein>
<organism>
    <name type="scientific">Escherichia coli O6:H1 (strain CFT073 / ATCC 700928 / UPEC)</name>
    <dbReference type="NCBI Taxonomy" id="199310"/>
    <lineage>
        <taxon>Bacteria</taxon>
        <taxon>Pseudomonadati</taxon>
        <taxon>Pseudomonadota</taxon>
        <taxon>Gammaproteobacteria</taxon>
        <taxon>Enterobacterales</taxon>
        <taxon>Enterobacteriaceae</taxon>
        <taxon>Escherichia</taxon>
    </lineage>
</organism>
<accession>P0A891</accession>
<accession>P37618</accession>
<gene>
    <name evidence="1" type="primary">tusA</name>
    <name type="ordered locus">c4263</name>
</gene>